<accession>B5FFE9</accession>
<gene>
    <name evidence="2" type="primary">bioH</name>
    <name type="ordered locus">VFMJ11_0116</name>
</gene>
<dbReference type="EC" id="3.1.1.85" evidence="2"/>
<dbReference type="EMBL" id="CP001139">
    <property type="protein sequence ID" value="ACH64925.1"/>
    <property type="molecule type" value="Genomic_DNA"/>
</dbReference>
<dbReference type="RefSeq" id="WP_012532707.1">
    <property type="nucleotide sequence ID" value="NC_011184.1"/>
</dbReference>
<dbReference type="SMR" id="B5FFE9"/>
<dbReference type="ESTHER" id="vibf1-bioh">
    <property type="family name" value="BioH"/>
</dbReference>
<dbReference type="KEGG" id="vfm:VFMJ11_0116"/>
<dbReference type="HOGENOM" id="CLU_020336_12_2_6"/>
<dbReference type="UniPathway" id="UPA00078"/>
<dbReference type="Proteomes" id="UP000001857">
    <property type="component" value="Chromosome I"/>
</dbReference>
<dbReference type="GO" id="GO:0005737">
    <property type="term" value="C:cytoplasm"/>
    <property type="evidence" value="ECO:0007669"/>
    <property type="project" value="UniProtKB-SubCell"/>
</dbReference>
<dbReference type="GO" id="GO:0090499">
    <property type="term" value="F:pimelyl-[acyl-carrier protein] methyl ester esterase activity"/>
    <property type="evidence" value="ECO:0007669"/>
    <property type="project" value="UniProtKB-EC"/>
</dbReference>
<dbReference type="GO" id="GO:0009102">
    <property type="term" value="P:biotin biosynthetic process"/>
    <property type="evidence" value="ECO:0007669"/>
    <property type="project" value="UniProtKB-UniRule"/>
</dbReference>
<dbReference type="Gene3D" id="3.40.50.1820">
    <property type="entry name" value="alpha/beta hydrolase"/>
    <property type="match status" value="1"/>
</dbReference>
<dbReference type="HAMAP" id="MF_01260">
    <property type="entry name" value="Carboxylester"/>
    <property type="match status" value="1"/>
</dbReference>
<dbReference type="InterPro" id="IPR000073">
    <property type="entry name" value="AB_hydrolase_1"/>
</dbReference>
<dbReference type="InterPro" id="IPR029058">
    <property type="entry name" value="AB_hydrolase_fold"/>
</dbReference>
<dbReference type="InterPro" id="IPR010076">
    <property type="entry name" value="BioH"/>
</dbReference>
<dbReference type="InterPro" id="IPR050228">
    <property type="entry name" value="Carboxylesterase_BioH"/>
</dbReference>
<dbReference type="NCBIfam" id="TIGR01738">
    <property type="entry name" value="bioH"/>
    <property type="match status" value="1"/>
</dbReference>
<dbReference type="PANTHER" id="PTHR43194">
    <property type="entry name" value="HYDROLASE ALPHA/BETA FOLD FAMILY"/>
    <property type="match status" value="1"/>
</dbReference>
<dbReference type="PANTHER" id="PTHR43194:SF5">
    <property type="entry name" value="PIMELOYL-[ACYL-CARRIER PROTEIN] METHYL ESTER ESTERASE"/>
    <property type="match status" value="1"/>
</dbReference>
<dbReference type="Pfam" id="PF00561">
    <property type="entry name" value="Abhydrolase_1"/>
    <property type="match status" value="1"/>
</dbReference>
<dbReference type="SUPFAM" id="SSF53474">
    <property type="entry name" value="alpha/beta-Hydrolases"/>
    <property type="match status" value="1"/>
</dbReference>
<name>BIOH_ALIFM</name>
<feature type="chain" id="PRO_1000140008" description="Pimeloyl-[acyl-carrier protein] methyl ester esterase">
    <location>
        <begin position="1"/>
        <end position="257"/>
    </location>
</feature>
<feature type="domain" description="AB hydrolase-1" evidence="1">
    <location>
        <begin position="16"/>
        <end position="240"/>
    </location>
</feature>
<feature type="active site" description="Nucleophile" evidence="2">
    <location>
        <position position="82"/>
    </location>
</feature>
<feature type="active site" evidence="2">
    <location>
        <position position="207"/>
    </location>
</feature>
<feature type="active site" evidence="2">
    <location>
        <position position="235"/>
    </location>
</feature>
<feature type="binding site" evidence="2">
    <location>
        <position position="22"/>
    </location>
    <ligand>
        <name>substrate</name>
    </ligand>
</feature>
<feature type="binding site" evidence="2">
    <location>
        <begin position="82"/>
        <end position="83"/>
    </location>
    <ligand>
        <name>substrate</name>
    </ligand>
</feature>
<feature type="binding site" evidence="2">
    <location>
        <begin position="143"/>
        <end position="147"/>
    </location>
    <ligand>
        <name>substrate</name>
    </ligand>
</feature>
<feature type="binding site" evidence="2">
    <location>
        <position position="235"/>
    </location>
    <ligand>
        <name>substrate</name>
    </ligand>
</feature>
<proteinExistence type="inferred from homology"/>
<reference key="1">
    <citation type="submission" date="2008-08" db="EMBL/GenBank/DDBJ databases">
        <title>Complete sequence of Vibrio fischeri strain MJ11.</title>
        <authorList>
            <person name="Mandel M.J."/>
            <person name="Stabb E.V."/>
            <person name="Ruby E.G."/>
            <person name="Ferriera S."/>
            <person name="Johnson J."/>
            <person name="Kravitz S."/>
            <person name="Beeson K."/>
            <person name="Sutton G."/>
            <person name="Rogers Y.-H."/>
            <person name="Friedman R."/>
            <person name="Frazier M."/>
            <person name="Venter J.C."/>
        </authorList>
    </citation>
    <scope>NUCLEOTIDE SEQUENCE [LARGE SCALE GENOMIC DNA]</scope>
    <source>
        <strain>MJ11</strain>
    </source>
</reference>
<comment type="function">
    <text evidence="2">The physiological role of BioH is to remove the methyl group introduced by BioC when the pimeloyl moiety is complete. It allows to synthesize pimeloyl-ACP via the fatty acid synthetic pathway through the hydrolysis of the ester bonds of pimeloyl-ACP esters.</text>
</comment>
<comment type="catalytic activity">
    <reaction evidence="2">
        <text>6-carboxyhexanoyl-[ACP] methyl ester + H2O = 6-carboxyhexanoyl-[ACP] + methanol + H(+)</text>
        <dbReference type="Rhea" id="RHEA:42700"/>
        <dbReference type="Rhea" id="RHEA-COMP:9955"/>
        <dbReference type="Rhea" id="RHEA-COMP:10186"/>
        <dbReference type="ChEBI" id="CHEBI:15377"/>
        <dbReference type="ChEBI" id="CHEBI:15378"/>
        <dbReference type="ChEBI" id="CHEBI:17790"/>
        <dbReference type="ChEBI" id="CHEBI:78846"/>
        <dbReference type="ChEBI" id="CHEBI:82735"/>
        <dbReference type="EC" id="3.1.1.85"/>
    </reaction>
</comment>
<comment type="pathway">
    <text evidence="2">Cofactor biosynthesis; biotin biosynthesis.</text>
</comment>
<comment type="subunit">
    <text evidence="2">Monomer.</text>
</comment>
<comment type="subcellular location">
    <subcellularLocation>
        <location evidence="2">Cytoplasm</location>
    </subcellularLocation>
</comment>
<comment type="similarity">
    <text evidence="2">Belongs to the AB hydrolase superfamily. Carboxylesterase BioH family.</text>
</comment>
<organism>
    <name type="scientific">Aliivibrio fischeri (strain MJ11)</name>
    <name type="common">Vibrio fischeri</name>
    <dbReference type="NCBI Taxonomy" id="388396"/>
    <lineage>
        <taxon>Bacteria</taxon>
        <taxon>Pseudomonadati</taxon>
        <taxon>Pseudomonadota</taxon>
        <taxon>Gammaproteobacteria</taxon>
        <taxon>Vibrionales</taxon>
        <taxon>Vibrionaceae</taxon>
        <taxon>Aliivibrio</taxon>
    </lineage>
</organism>
<keyword id="KW-0093">Biotin biosynthesis</keyword>
<keyword id="KW-0963">Cytoplasm</keyword>
<keyword id="KW-0378">Hydrolase</keyword>
<keyword id="KW-0719">Serine esterase</keyword>
<sequence>MTTSLYWQTEGEGSDLVLIHGWGMNGAVWQTTSEKLSQHYRVHTVDLSGYGHSAELGSADFDEMVKQVLAQAPKKAAWLGWSLGGLIATKAALTSPERVSQLITVASSPCFSAEKGWRGIKPLILSQFTEQLKTDFTLTVERFMALQAMGSPNAKQDIKLIKKAVFSRPMPDQQALATGLMILADIDLREAVSQLSMPVCRMYGRLDGLVPIKVAHYMDELMPNSAKIVFEQASHAPFISHNDEFISELRTFLNQHA</sequence>
<protein>
    <recommendedName>
        <fullName evidence="2">Pimeloyl-[acyl-carrier protein] methyl ester esterase</fullName>
        <ecNumber evidence="2">3.1.1.85</ecNumber>
    </recommendedName>
    <alternativeName>
        <fullName evidence="2">Biotin synthesis protein BioH</fullName>
    </alternativeName>
    <alternativeName>
        <fullName evidence="2">Carboxylesterase BioH</fullName>
    </alternativeName>
</protein>
<evidence type="ECO:0000255" key="1"/>
<evidence type="ECO:0000255" key="2">
    <source>
        <dbReference type="HAMAP-Rule" id="MF_01260"/>
    </source>
</evidence>